<organism>
    <name type="scientific">Loxosceles arizonica</name>
    <name type="common">Arizona brown spider</name>
    <dbReference type="NCBI Taxonomy" id="196454"/>
    <lineage>
        <taxon>Eukaryota</taxon>
        <taxon>Metazoa</taxon>
        <taxon>Ecdysozoa</taxon>
        <taxon>Arthropoda</taxon>
        <taxon>Chelicerata</taxon>
        <taxon>Arachnida</taxon>
        <taxon>Araneae</taxon>
        <taxon>Araneomorphae</taxon>
        <taxon>Haplogynae</taxon>
        <taxon>Scytodoidea</taxon>
        <taxon>Sicariidae</taxon>
        <taxon>Loxosceles</taxon>
    </lineage>
</organism>
<name>A31_LOXAR</name>
<dbReference type="EC" id="4.6.1.-" evidence="4"/>
<dbReference type="EMBL" id="FJ171444">
    <property type="protein sequence ID" value="ACN48940.1"/>
    <property type="molecule type" value="mRNA"/>
</dbReference>
<dbReference type="SMR" id="C0JB09"/>
<dbReference type="GO" id="GO:0005576">
    <property type="term" value="C:extracellular region"/>
    <property type="evidence" value="ECO:0007669"/>
    <property type="project" value="UniProtKB-SubCell"/>
</dbReference>
<dbReference type="GO" id="GO:0016829">
    <property type="term" value="F:lyase activity"/>
    <property type="evidence" value="ECO:0007669"/>
    <property type="project" value="UniProtKB-KW"/>
</dbReference>
<dbReference type="GO" id="GO:0046872">
    <property type="term" value="F:metal ion binding"/>
    <property type="evidence" value="ECO:0007669"/>
    <property type="project" value="UniProtKB-KW"/>
</dbReference>
<dbReference type="GO" id="GO:0008081">
    <property type="term" value="F:phosphoric diester hydrolase activity"/>
    <property type="evidence" value="ECO:0007669"/>
    <property type="project" value="InterPro"/>
</dbReference>
<dbReference type="GO" id="GO:0090729">
    <property type="term" value="F:toxin activity"/>
    <property type="evidence" value="ECO:0007669"/>
    <property type="project" value="UniProtKB-KW"/>
</dbReference>
<dbReference type="GO" id="GO:0031640">
    <property type="term" value="P:killing of cells of another organism"/>
    <property type="evidence" value="ECO:0007669"/>
    <property type="project" value="UniProtKB-KW"/>
</dbReference>
<dbReference type="GO" id="GO:0016042">
    <property type="term" value="P:lipid catabolic process"/>
    <property type="evidence" value="ECO:0007669"/>
    <property type="project" value="UniProtKB-KW"/>
</dbReference>
<dbReference type="CDD" id="cd08576">
    <property type="entry name" value="GDPD_like_SMaseD_PLD"/>
    <property type="match status" value="1"/>
</dbReference>
<dbReference type="Gene3D" id="3.20.20.190">
    <property type="entry name" value="Phosphatidylinositol (PI) phosphodiesterase"/>
    <property type="match status" value="1"/>
</dbReference>
<dbReference type="InterPro" id="IPR017946">
    <property type="entry name" value="PLC-like_Pdiesterase_TIM-brl"/>
</dbReference>
<dbReference type="Pfam" id="PF13653">
    <property type="entry name" value="GDPD_2"/>
    <property type="match status" value="1"/>
</dbReference>
<dbReference type="SUPFAM" id="SSF51695">
    <property type="entry name" value="PLC-like phosphodiesterases"/>
    <property type="match status" value="1"/>
</dbReference>
<sequence>WIMGHMVNAVPQIDQFVNLGSNALEMDVTFNKDAMPVYTYHGTPCDCLRDCLRWEHFPVFLQELRKATSPGDAKYHEKLVLLLFDLKTGKINNNQANTAGQNVAKQLLQHYWNYGNNGGRAYVILSIPYVEHYELIRGFRETLKKEGHENLMEKVGYDFSGRHKLDTVREAYKKAGVDGHVWQSDGITNCLPLVDDLPRVREAVRNRDSPDGFINKVYYWTVDKVATTKKALGAGVDGVMTNHPDVIVNVLNESGYNDKYRLATYDDNPWETFRN</sequence>
<evidence type="ECO:0000250" key="1">
    <source>
        <dbReference type="UniProtKB" id="A0A0D4WTV1"/>
    </source>
</evidence>
<evidence type="ECO:0000250" key="2">
    <source>
        <dbReference type="UniProtKB" id="A0A0D4WV12"/>
    </source>
</evidence>
<evidence type="ECO:0000250" key="3">
    <source>
        <dbReference type="UniProtKB" id="P0CE80"/>
    </source>
</evidence>
<evidence type="ECO:0000250" key="4">
    <source>
        <dbReference type="UniProtKB" id="Q4ZFU2"/>
    </source>
</evidence>
<evidence type="ECO:0000250" key="5">
    <source>
        <dbReference type="UniProtKB" id="Q8I914"/>
    </source>
</evidence>
<evidence type="ECO:0000255" key="6"/>
<evidence type="ECO:0000303" key="7">
    <source>
    </source>
</evidence>
<evidence type="ECO:0000305" key="8"/>
<evidence type="ECO:0000305" key="9">
    <source>
    </source>
</evidence>
<feature type="chain" id="PRO_0000392826" description="Dermonecrotic toxin LarSicTox-alphaIII1">
    <location>
        <begin position="1" status="less than"/>
        <end position="275"/>
    </location>
</feature>
<feature type="active site" evidence="5">
    <location>
        <position position="5"/>
    </location>
</feature>
<feature type="active site" description="Nucleophile" evidence="5">
    <location>
        <position position="41"/>
    </location>
</feature>
<feature type="binding site" evidence="5">
    <location>
        <position position="25"/>
    </location>
    <ligand>
        <name>Mg(2+)</name>
        <dbReference type="ChEBI" id="CHEBI:18420"/>
    </ligand>
</feature>
<feature type="binding site" evidence="5">
    <location>
        <position position="27"/>
    </location>
    <ligand>
        <name>Mg(2+)</name>
        <dbReference type="ChEBI" id="CHEBI:18420"/>
    </ligand>
</feature>
<feature type="binding site" evidence="5">
    <location>
        <position position="85"/>
    </location>
    <ligand>
        <name>Mg(2+)</name>
        <dbReference type="ChEBI" id="CHEBI:18420"/>
    </ligand>
</feature>
<feature type="glycosylation site" description="N-linked (GlcNAc...) asparagine" evidence="6">
    <location>
        <position position="252"/>
    </location>
</feature>
<feature type="disulfide bond" evidence="3">
    <location>
        <begin position="45"/>
        <end position="51"/>
    </location>
</feature>
<feature type="disulfide bond" evidence="3">
    <location>
        <begin position="47"/>
        <end position="190"/>
    </location>
</feature>
<feature type="non-terminal residue">
    <location>
        <position position="1"/>
    </location>
</feature>
<keyword id="KW-0204">Cytolysis</keyword>
<keyword id="KW-1061">Dermonecrotic toxin</keyword>
<keyword id="KW-1015">Disulfide bond</keyword>
<keyword id="KW-0325">Glycoprotein</keyword>
<keyword id="KW-0354">Hemolysis</keyword>
<keyword id="KW-0442">Lipid degradation</keyword>
<keyword id="KW-0443">Lipid metabolism</keyword>
<keyword id="KW-0456">Lyase</keyword>
<keyword id="KW-0460">Magnesium</keyword>
<keyword id="KW-0479">Metal-binding</keyword>
<keyword id="KW-0964">Secreted</keyword>
<keyword id="KW-0800">Toxin</keyword>
<reference key="1">
    <citation type="journal article" date="2009" name="Mol. Biol. Evol.">
        <title>Molecular evolution, functional variation, and proposed nomenclature of the gene family that includes sphingomyelinase D in sicariid spider venoms.</title>
        <authorList>
            <person name="Binford G.J."/>
            <person name="Bodner M.R."/>
            <person name="Cordes M.H."/>
            <person name="Baldwin K.L."/>
            <person name="Rynerson M.R."/>
            <person name="Burns S.N."/>
            <person name="Zobel-Thropp P.A."/>
        </authorList>
    </citation>
    <scope>NUCLEOTIDE SEQUENCE [MRNA]</scope>
    <scope>NOMENCLATURE</scope>
    <source>
        <tissue>Venom gland</tissue>
    </source>
</reference>
<accession>C0JB09</accession>
<protein>
    <recommendedName>
        <fullName evidence="7">Dermonecrotic toxin LarSicTox-alphaIII1</fullName>
        <ecNumber evidence="4">4.6.1.-</ecNumber>
    </recommendedName>
    <alternativeName>
        <fullName>Phospholipase D</fullName>
        <shortName>PLD</shortName>
    </alternativeName>
    <alternativeName>
        <fullName>Sphingomyelin phosphodiesterase D</fullName>
        <shortName>SMD</shortName>
        <shortName>SMase D</shortName>
        <shortName>Sphingomyelinase D</shortName>
    </alternativeName>
</protein>
<comment type="function">
    <text evidence="1 3">Dermonecrotic toxins cleave the phosphodiester linkage between the phosphate and headgroup of certain phospholipids (sphingolipid and lysolipid substrates), forming an alcohol (often choline) and a cyclic phosphate (By similarity). This toxin acts on sphingomyelin (SM) (By similarity). It may also act on ceramide phosphoethanolamine (CPE), lysophosphatidylcholine (LPC) and lysophosphatidylethanolamine (LPE), but not on lysophosphatidylserine (LPS), and lysophosphatidylglycerol (LPG) (By similarity). It acts by transphosphatidylation, releasing exclusively cyclic phosphate products as second products (By similarity). Induces dermonecrosis, hemolysis, increased vascular permeability, edema, inflammatory response, and platelet aggregation (By similarity).</text>
</comment>
<comment type="catalytic activity">
    <reaction evidence="1">
        <text>an N-(acyl)-sphingosylphosphocholine = an N-(acyl)-sphingosyl-1,3-cyclic phosphate + choline</text>
        <dbReference type="Rhea" id="RHEA:60652"/>
        <dbReference type="ChEBI" id="CHEBI:15354"/>
        <dbReference type="ChEBI" id="CHEBI:64583"/>
        <dbReference type="ChEBI" id="CHEBI:143892"/>
    </reaction>
</comment>
<comment type="catalytic activity">
    <reaction evidence="1">
        <text>an N-(acyl)-sphingosylphosphoethanolamine = an N-(acyl)-sphingosyl-1,3-cyclic phosphate + ethanolamine</text>
        <dbReference type="Rhea" id="RHEA:60648"/>
        <dbReference type="ChEBI" id="CHEBI:57603"/>
        <dbReference type="ChEBI" id="CHEBI:143891"/>
        <dbReference type="ChEBI" id="CHEBI:143892"/>
    </reaction>
</comment>
<comment type="catalytic activity">
    <reaction evidence="1">
        <text>a 1-acyl-sn-glycero-3-phosphocholine = a 1-acyl-sn-glycero-2,3-cyclic phosphate + choline</text>
        <dbReference type="Rhea" id="RHEA:60700"/>
        <dbReference type="ChEBI" id="CHEBI:15354"/>
        <dbReference type="ChEBI" id="CHEBI:58168"/>
        <dbReference type="ChEBI" id="CHEBI:143947"/>
    </reaction>
</comment>
<comment type="catalytic activity">
    <reaction evidence="1">
        <text>a 1-acyl-sn-glycero-3-phosphoethanolamine = a 1-acyl-sn-glycero-2,3-cyclic phosphate + ethanolamine</text>
        <dbReference type="Rhea" id="RHEA:60704"/>
        <dbReference type="ChEBI" id="CHEBI:57603"/>
        <dbReference type="ChEBI" id="CHEBI:64381"/>
        <dbReference type="ChEBI" id="CHEBI:143947"/>
    </reaction>
</comment>
<comment type="cofactor">
    <cofactor evidence="5">
        <name>Mg(2+)</name>
        <dbReference type="ChEBI" id="CHEBI:18420"/>
    </cofactor>
    <text evidence="5">Binds 1 Mg(2+) ion per subunit.</text>
</comment>
<comment type="subcellular location">
    <subcellularLocation>
        <location evidence="9">Secreted</location>
    </subcellularLocation>
</comment>
<comment type="tissue specificity">
    <text evidence="9">Expressed by the venom gland.</text>
</comment>
<comment type="similarity">
    <text evidence="8">Belongs to the arthropod phospholipase D family. Class II subfamily.</text>
</comment>
<comment type="caution">
    <text evidence="1 2 4">The most common activity assay for dermonecrotic toxins detects enzymatic activity by monitoring choline release from substrate. Liberation of choline from sphingomyelin (SM) or lysophosphatidylcholine (LPC) is commonly assumed to result from substrate hydrolysis, giving either ceramide-1-phosphate (C1P) or lysophosphatidic acid (LPA), respectively, as a second product. However, two studies from Lajoie and colleagues (2013 and 2015) report the observation of exclusive formation of cyclic phosphate products as second products, resulting from intramolecular transphosphatidylation. Cyclic phosphates have vastly different biological properties from their monoester counterparts, and they may be relevant to the pathology of brown spider envenomation.</text>
</comment>
<proteinExistence type="evidence at transcript level"/>